<accession>Q8H8C7</accession>
<accession>B7ELL0</accession>
<accession>Q1ESX3</accession>
<proteinExistence type="evidence at protein level"/>
<protein>
    <recommendedName>
        <fullName evidence="9">Chitin elicitor-binding protein</fullName>
        <shortName evidence="9">CEBiP</shortName>
        <shortName evidence="10">OsCEBiP</shortName>
    </recommendedName>
    <alternativeName>
        <fullName>Lysin motif-containing protein 1</fullName>
        <shortName>Os-LYP1</shortName>
    </alternativeName>
</protein>
<feature type="signal peptide" evidence="4">
    <location>
        <begin position="1"/>
        <end position="28"/>
    </location>
</feature>
<feature type="chain" id="PRO_0000283613" description="Chitin elicitor-binding protein">
    <location>
        <begin position="29"/>
        <end position="356"/>
    </location>
</feature>
<feature type="transmembrane region" description="Helical" evidence="2">
    <location>
        <begin position="336"/>
        <end position="356"/>
    </location>
</feature>
<feature type="domain" description="LysM 1" evidence="3">
    <location>
        <begin position="111"/>
        <end position="158"/>
    </location>
</feature>
<feature type="domain" description="LysM 2" evidence="3">
    <location>
        <begin position="175"/>
        <end position="219"/>
    </location>
</feature>
<feature type="binding site" evidence="8 16">
    <location>
        <begin position="50"/>
        <end position="51"/>
    </location>
    <ligand>
        <name>chitin</name>
        <dbReference type="ChEBI" id="CHEBI:17029"/>
    </ligand>
</feature>
<feature type="binding site" evidence="1">
    <location>
        <begin position="117"/>
        <end position="123"/>
    </location>
    <ligand>
        <name>chitin</name>
        <dbReference type="ChEBI" id="CHEBI:17029"/>
    </ligand>
</feature>
<feature type="binding site" evidence="8 17">
    <location>
        <position position="142"/>
    </location>
    <ligand>
        <name>chitin</name>
        <dbReference type="ChEBI" id="CHEBI:17029"/>
    </ligand>
</feature>
<feature type="binding site" evidence="1">
    <location>
        <begin position="145"/>
        <end position="152"/>
    </location>
    <ligand>
        <name>chitin</name>
        <dbReference type="ChEBI" id="CHEBI:17029"/>
    </ligand>
</feature>
<feature type="binding site" evidence="8 17">
    <location>
        <position position="155"/>
    </location>
    <ligand>
        <name>chitin</name>
        <dbReference type="ChEBI" id="CHEBI:17029"/>
    </ligand>
</feature>
<feature type="binding site" evidence="8 16">
    <location>
        <position position="182"/>
    </location>
    <ligand>
        <name>chitin</name>
        <dbReference type="ChEBI" id="CHEBI:17029"/>
    </ligand>
</feature>
<feature type="binding site" evidence="8 17">
    <location>
        <position position="186"/>
    </location>
    <ligand>
        <name>chitin</name>
        <dbReference type="ChEBI" id="CHEBI:17029"/>
    </ligand>
</feature>
<feature type="binding site" evidence="8 16">
    <location>
        <begin position="211"/>
        <end position="213"/>
    </location>
    <ligand>
        <name>chitin</name>
        <dbReference type="ChEBI" id="CHEBI:17029"/>
    </ligand>
</feature>
<feature type="glycosylation site" description="N-linked (GlcNAc...) asparagine" evidence="2">
    <location>
        <position position="30"/>
    </location>
</feature>
<feature type="glycosylation site" description="N-linked (GlcNAc...) asparagine" evidence="8 16">
    <location>
        <position position="63"/>
    </location>
</feature>
<feature type="glycosylation site" description="N-linked (GlcNAc...) asparagine" evidence="8 16">
    <location>
        <position position="89"/>
    </location>
</feature>
<feature type="glycosylation site" description="N-linked (GlcNAc...) asparagine" evidence="2">
    <location>
        <position position="151"/>
    </location>
</feature>
<feature type="glycosylation site" description="N-linked (GlcNAc...) asparagine" evidence="8 16">
    <location>
        <position position="184"/>
    </location>
</feature>
<feature type="glycosylation site" description="N-linked (GlcNAc...) asparagine" evidence="2">
    <location>
        <position position="265"/>
    </location>
</feature>
<feature type="glycosylation site" description="N-linked (GlcNAc...) asparagine" evidence="2">
    <location>
        <position position="281"/>
    </location>
</feature>
<feature type="glycosylation site" description="N-linked (GlcNAc...) asparagine" evidence="2">
    <location>
        <position position="290"/>
    </location>
</feature>
<feature type="glycosylation site" description="N-linked (GlcNAc...) asparagine" evidence="8 17">
    <location>
        <position position="306"/>
    </location>
</feature>
<feature type="glycosylation site" description="N-linked (GlcNAc...) asparagine" evidence="2">
    <location>
        <position position="319"/>
    </location>
</feature>
<feature type="disulfide bond" evidence="8 16 17">
    <location>
        <begin position="33"/>
        <end position="100"/>
    </location>
</feature>
<feature type="disulfide bond" evidence="8 16">
    <location>
        <begin position="41"/>
        <end position="164"/>
    </location>
</feature>
<feature type="disulfide bond" evidence="8 16 17">
    <location>
        <begin position="98"/>
        <end position="162"/>
    </location>
</feature>
<feature type="disulfide bond" evidence="8 17">
    <location>
        <begin position="100"/>
        <end position="164"/>
    </location>
</feature>
<feature type="disulfide bond" evidence="8 17">
    <location>
        <begin position="224"/>
        <end position="257"/>
    </location>
</feature>
<feature type="disulfide bond" evidence="8 17">
    <location>
        <begin position="252"/>
        <end position="274"/>
    </location>
</feature>
<feature type="strand" evidence="18">
    <location>
        <begin position="40"/>
        <end position="48"/>
    </location>
</feature>
<feature type="helix" evidence="18">
    <location>
        <begin position="55"/>
        <end position="62"/>
    </location>
</feature>
<feature type="helix" evidence="18">
    <location>
        <begin position="67"/>
        <end position="73"/>
    </location>
</feature>
<feature type="strand" evidence="18">
    <location>
        <begin position="91"/>
        <end position="100"/>
    </location>
</feature>
<feature type="strand" evidence="18">
    <location>
        <begin position="102"/>
        <end position="109"/>
    </location>
</feature>
<feature type="strand" evidence="18">
    <location>
        <begin position="112"/>
        <end position="114"/>
    </location>
</feature>
<feature type="helix" evidence="18">
    <location>
        <begin position="121"/>
        <end position="127"/>
    </location>
</feature>
<feature type="helix" evidence="18">
    <location>
        <begin position="135"/>
        <end position="141"/>
    </location>
</feature>
<feature type="strand" evidence="18">
    <location>
        <begin position="146"/>
        <end position="148"/>
    </location>
</feature>
<feature type="strand" evidence="18">
    <location>
        <begin position="155"/>
        <end position="157"/>
    </location>
</feature>
<feature type="strand" evidence="18">
    <location>
        <begin position="173"/>
        <end position="178"/>
    </location>
</feature>
<feature type="helix" evidence="18">
    <location>
        <begin position="185"/>
        <end position="191"/>
    </location>
</feature>
<feature type="helix" evidence="18">
    <location>
        <begin position="196"/>
        <end position="202"/>
    </location>
</feature>
<feature type="helix" evidence="18">
    <location>
        <begin position="208"/>
        <end position="210"/>
    </location>
</feature>
<feature type="strand" evidence="18">
    <location>
        <begin position="216"/>
        <end position="221"/>
    </location>
</feature>
<feature type="turn" evidence="19">
    <location>
        <begin position="233"/>
        <end position="237"/>
    </location>
</feature>
<feature type="strand" evidence="19">
    <location>
        <begin position="245"/>
        <end position="248"/>
    </location>
</feature>
<feature type="turn" evidence="19">
    <location>
        <begin position="249"/>
        <end position="252"/>
    </location>
</feature>
<feature type="strand" evidence="19">
    <location>
        <begin position="253"/>
        <end position="256"/>
    </location>
</feature>
<feature type="turn" evidence="19">
    <location>
        <begin position="259"/>
        <end position="261"/>
    </location>
</feature>
<feature type="strand" evidence="19">
    <location>
        <begin position="265"/>
        <end position="268"/>
    </location>
</feature>
<feature type="turn" evidence="19">
    <location>
        <begin position="281"/>
        <end position="283"/>
    </location>
</feature>
<feature type="strand" evidence="19">
    <location>
        <begin position="289"/>
        <end position="295"/>
    </location>
</feature>
<feature type="strand" evidence="19">
    <location>
        <begin position="297"/>
        <end position="305"/>
    </location>
</feature>
<feature type="strand" evidence="19">
    <location>
        <begin position="307"/>
        <end position="309"/>
    </location>
</feature>
<feature type="strand" evidence="19">
    <location>
        <begin position="311"/>
        <end position="318"/>
    </location>
</feature>
<dbReference type="EMBL" id="AB206975">
    <property type="protein sequence ID" value="BAE95828.1"/>
    <property type="status" value="ALT_INIT"/>
    <property type="molecule type" value="mRNA"/>
</dbReference>
<dbReference type="EMBL" id="AC099399">
    <property type="protein sequence ID" value="AAN05509.1"/>
    <property type="molecule type" value="Genomic_DNA"/>
</dbReference>
<dbReference type="EMBL" id="DP000009">
    <property type="protein sequence ID" value="ABF93833.1"/>
    <property type="molecule type" value="Genomic_DNA"/>
</dbReference>
<dbReference type="EMBL" id="AP008209">
    <property type="protein sequence ID" value="BAF10789.1"/>
    <property type="molecule type" value="Genomic_DNA"/>
</dbReference>
<dbReference type="EMBL" id="AP014959">
    <property type="protein sequence ID" value="BAS82158.1"/>
    <property type="molecule type" value="Genomic_DNA"/>
</dbReference>
<dbReference type="EMBL" id="CM000146">
    <property type="protein sequence ID" value="EAZ45419.1"/>
    <property type="molecule type" value="Genomic_DNA"/>
</dbReference>
<dbReference type="EMBL" id="AK073032">
    <property type="protein sequence ID" value="BAG93257.1"/>
    <property type="molecule type" value="mRNA"/>
</dbReference>
<dbReference type="RefSeq" id="NP_001388964.1">
    <property type="nucleotide sequence ID" value="NM_001402035.1"/>
</dbReference>
<dbReference type="RefSeq" id="XP_015630176.1">
    <property type="nucleotide sequence ID" value="XM_015774690.1"/>
</dbReference>
<dbReference type="PDB" id="5JCD">
    <property type="method" value="X-ray"/>
    <property type="resolution" value="2.40 A"/>
    <property type="chains" value="A/B/C=29-223"/>
</dbReference>
<dbReference type="PDB" id="5JCE">
    <property type="method" value="X-ray"/>
    <property type="resolution" value="2.51 A"/>
    <property type="chains" value="A/B=29-325"/>
</dbReference>
<dbReference type="PDBsum" id="5JCD"/>
<dbReference type="PDBsum" id="5JCE"/>
<dbReference type="SMR" id="Q8H8C7"/>
<dbReference type="FunCoup" id="Q8H8C7">
    <property type="interactions" value="155"/>
</dbReference>
<dbReference type="STRING" id="39947.Q8H8C7"/>
<dbReference type="CAZy" id="CBM50">
    <property type="family name" value="Carbohydrate-Binding Module Family 50"/>
</dbReference>
<dbReference type="GlyCosmos" id="Q8H8C7">
    <property type="glycosylation" value="10 sites, No reported glycans"/>
</dbReference>
<dbReference type="iPTMnet" id="Q8H8C7"/>
<dbReference type="PaxDb" id="39947-Q8H8C7"/>
<dbReference type="EnsemblPlants" id="Os03t0133400-01">
    <property type="protein sequence ID" value="Os03t0133400-01"/>
    <property type="gene ID" value="Os03g0133400"/>
</dbReference>
<dbReference type="GeneID" id="4331522"/>
<dbReference type="Gramene" id="Os03t0133400-01">
    <property type="protein sequence ID" value="Os03t0133400-01"/>
    <property type="gene ID" value="Os03g0133400"/>
</dbReference>
<dbReference type="KEGG" id="dosa:Os03g0133400"/>
<dbReference type="eggNOG" id="ENOG502QQ9K">
    <property type="taxonomic scope" value="Eukaryota"/>
</dbReference>
<dbReference type="HOGENOM" id="CLU_047073_0_0_1"/>
<dbReference type="InParanoid" id="Q8H8C7"/>
<dbReference type="OMA" id="CAYTGYS"/>
<dbReference type="PlantReactome" id="R-OSA-9611432">
    <property type="pathway name" value="Recognition of fungal and bacterial pathogens and immunity response"/>
</dbReference>
<dbReference type="Proteomes" id="UP000000763">
    <property type="component" value="Chromosome 3"/>
</dbReference>
<dbReference type="Proteomes" id="UP000007752">
    <property type="component" value="Chromosome 9"/>
</dbReference>
<dbReference type="Proteomes" id="UP000059680">
    <property type="component" value="Chromosome 3"/>
</dbReference>
<dbReference type="GO" id="GO:0005886">
    <property type="term" value="C:plasma membrane"/>
    <property type="evidence" value="ECO:0007669"/>
    <property type="project" value="UniProtKB-SubCell"/>
</dbReference>
<dbReference type="GO" id="GO:0008061">
    <property type="term" value="F:chitin binding"/>
    <property type="evidence" value="ECO:0007669"/>
    <property type="project" value="UniProtKB-KW"/>
</dbReference>
<dbReference type="GO" id="GO:0006952">
    <property type="term" value="P:defense response"/>
    <property type="evidence" value="ECO:0007669"/>
    <property type="project" value="UniProtKB-KW"/>
</dbReference>
<dbReference type="CDD" id="cd00118">
    <property type="entry name" value="LysM"/>
    <property type="match status" value="2"/>
</dbReference>
<dbReference type="FunFam" id="3.10.350.10:FF:000020">
    <property type="entry name" value="Peptidoglycan-binding LysM domain-containing protein"/>
    <property type="match status" value="1"/>
</dbReference>
<dbReference type="Gene3D" id="3.10.350.10">
    <property type="entry name" value="LysM domain"/>
    <property type="match status" value="2"/>
</dbReference>
<dbReference type="InterPro" id="IPR018392">
    <property type="entry name" value="LysM_dom"/>
</dbReference>
<dbReference type="InterPro" id="IPR036779">
    <property type="entry name" value="LysM_dom_sf"/>
</dbReference>
<dbReference type="PANTHER" id="PTHR33734:SF31">
    <property type="entry name" value="CHITIN ELICITOR-BINDING PROTEIN"/>
    <property type="match status" value="1"/>
</dbReference>
<dbReference type="PANTHER" id="PTHR33734">
    <property type="entry name" value="LYSM DOMAIN-CONTAINING GPI-ANCHORED PROTEIN 2"/>
    <property type="match status" value="1"/>
</dbReference>
<dbReference type="Pfam" id="PF01476">
    <property type="entry name" value="LysM"/>
    <property type="match status" value="2"/>
</dbReference>
<dbReference type="SMART" id="SM00257">
    <property type="entry name" value="LysM"/>
    <property type="match status" value="2"/>
</dbReference>
<dbReference type="SUPFAM" id="SSF54106">
    <property type="entry name" value="LysM domain"/>
    <property type="match status" value="2"/>
</dbReference>
<dbReference type="PROSITE" id="PS51782">
    <property type="entry name" value="LYSM"/>
    <property type="match status" value="2"/>
</dbReference>
<reference key="1">
    <citation type="journal article" date="2006" name="Proc. Natl. Acad. Sci. U.S.A.">
        <title>Plant cells recognize chitin fragments for defense signaling through a plasma membrane receptor.</title>
        <authorList>
            <person name="Kaku H."/>
            <person name="Nishizawa Y."/>
            <person name="Ishii-Minami N."/>
            <person name="Akimoto-Tomiyama C."/>
            <person name="Dohmae N."/>
            <person name="Takio K."/>
            <person name="Minami E."/>
            <person name="Shibuya N."/>
        </authorList>
    </citation>
    <scope>NUCLEOTIDE SEQUENCE [MRNA]</scope>
    <scope>PROTEIN SEQUENCE OF 29-60; 171-177; 182-187 AND 205-210</scope>
    <scope>FUNCTION</scope>
    <scope>SUBCELLULAR LOCATION</scope>
    <scope>INDUCTION</scope>
    <scope>INTERACTION WITH CHITIN OLIGOSACCHARIDE ELICITOR</scope>
    <scope>GLYCOSYLATION</scope>
    <source>
        <strain>cv. Nipponbare</strain>
    </source>
</reference>
<reference key="2">
    <citation type="journal article" date="2005" name="Genome Res.">
        <title>Sequence, annotation, and analysis of synteny between rice chromosome 3 and diverged grass species.</title>
        <authorList>
            <consortium name="The rice chromosome 3 sequencing consortium"/>
            <person name="Buell C.R."/>
            <person name="Yuan Q."/>
            <person name="Ouyang S."/>
            <person name="Liu J."/>
            <person name="Zhu W."/>
            <person name="Wang A."/>
            <person name="Maiti R."/>
            <person name="Haas B."/>
            <person name="Wortman J."/>
            <person name="Pertea M."/>
            <person name="Jones K.M."/>
            <person name="Kim M."/>
            <person name="Overton L."/>
            <person name="Tsitrin T."/>
            <person name="Fadrosh D."/>
            <person name="Bera J."/>
            <person name="Weaver B."/>
            <person name="Jin S."/>
            <person name="Johri S."/>
            <person name="Reardon M."/>
            <person name="Webb K."/>
            <person name="Hill J."/>
            <person name="Moffat K."/>
            <person name="Tallon L."/>
            <person name="Van Aken S."/>
            <person name="Lewis M."/>
            <person name="Utterback T."/>
            <person name="Feldblyum T."/>
            <person name="Zismann V."/>
            <person name="Iobst S."/>
            <person name="Hsiao J."/>
            <person name="de Vazeille A.R."/>
            <person name="Salzberg S.L."/>
            <person name="White O."/>
            <person name="Fraser C.M."/>
            <person name="Yu Y."/>
            <person name="Kim H."/>
            <person name="Rambo T."/>
            <person name="Currie J."/>
            <person name="Collura K."/>
            <person name="Kernodle-Thompson S."/>
            <person name="Wei F."/>
            <person name="Kudrna K."/>
            <person name="Ammiraju J.S.S."/>
            <person name="Luo M."/>
            <person name="Goicoechea J.L."/>
            <person name="Wing R.A."/>
            <person name="Henry D."/>
            <person name="Oates R."/>
            <person name="Palmer M."/>
            <person name="Pries G."/>
            <person name="Saski C."/>
            <person name="Simmons J."/>
            <person name="Soderlund C."/>
            <person name="Nelson W."/>
            <person name="de la Bastide M."/>
            <person name="Spiegel L."/>
            <person name="Nascimento L."/>
            <person name="Huang E."/>
            <person name="Preston R."/>
            <person name="Zutavern T."/>
            <person name="Palmer L."/>
            <person name="O'Shaughnessy A."/>
            <person name="Dike S."/>
            <person name="McCombie W.R."/>
            <person name="Minx P."/>
            <person name="Cordum H."/>
            <person name="Wilson R."/>
            <person name="Jin W."/>
            <person name="Lee H.R."/>
            <person name="Jiang J."/>
            <person name="Jackson S."/>
        </authorList>
    </citation>
    <scope>NUCLEOTIDE SEQUENCE [LARGE SCALE GENOMIC DNA]</scope>
    <source>
        <strain>cv. Nipponbare</strain>
    </source>
</reference>
<reference key="3">
    <citation type="journal article" date="2005" name="Nature">
        <title>The map-based sequence of the rice genome.</title>
        <authorList>
            <consortium name="International rice genome sequencing project (IRGSP)"/>
        </authorList>
    </citation>
    <scope>NUCLEOTIDE SEQUENCE [LARGE SCALE GENOMIC DNA]</scope>
    <source>
        <strain>cv. Nipponbare</strain>
    </source>
</reference>
<reference key="4">
    <citation type="journal article" date="2008" name="Nucleic Acids Res.">
        <title>The rice annotation project database (RAP-DB): 2008 update.</title>
        <authorList>
            <consortium name="The rice annotation project (RAP)"/>
        </authorList>
    </citation>
    <scope>GENOME REANNOTATION</scope>
    <source>
        <strain>cv. Nipponbare</strain>
    </source>
</reference>
<reference key="5">
    <citation type="journal article" date="2013" name="Rice">
        <title>Improvement of the Oryza sativa Nipponbare reference genome using next generation sequence and optical map data.</title>
        <authorList>
            <person name="Kawahara Y."/>
            <person name="de la Bastide M."/>
            <person name="Hamilton J.P."/>
            <person name="Kanamori H."/>
            <person name="McCombie W.R."/>
            <person name="Ouyang S."/>
            <person name="Schwartz D.C."/>
            <person name="Tanaka T."/>
            <person name="Wu J."/>
            <person name="Zhou S."/>
            <person name="Childs K.L."/>
            <person name="Davidson R.M."/>
            <person name="Lin H."/>
            <person name="Quesada-Ocampo L."/>
            <person name="Vaillancourt B."/>
            <person name="Sakai H."/>
            <person name="Lee S.S."/>
            <person name="Kim J."/>
            <person name="Numa H."/>
            <person name="Itoh T."/>
            <person name="Buell C.R."/>
            <person name="Matsumoto T."/>
        </authorList>
    </citation>
    <scope>GENOME REANNOTATION</scope>
    <source>
        <strain>cv. Nipponbare</strain>
    </source>
</reference>
<reference key="6">
    <citation type="journal article" date="2005" name="PLoS Biol.">
        <title>The genomes of Oryza sativa: a history of duplications.</title>
        <authorList>
            <person name="Yu J."/>
            <person name="Wang J."/>
            <person name="Lin W."/>
            <person name="Li S."/>
            <person name="Li H."/>
            <person name="Zhou J."/>
            <person name="Ni P."/>
            <person name="Dong W."/>
            <person name="Hu S."/>
            <person name="Zeng C."/>
            <person name="Zhang J."/>
            <person name="Zhang Y."/>
            <person name="Li R."/>
            <person name="Xu Z."/>
            <person name="Li S."/>
            <person name="Li X."/>
            <person name="Zheng H."/>
            <person name="Cong L."/>
            <person name="Lin L."/>
            <person name="Yin J."/>
            <person name="Geng J."/>
            <person name="Li G."/>
            <person name="Shi J."/>
            <person name="Liu J."/>
            <person name="Lv H."/>
            <person name="Li J."/>
            <person name="Wang J."/>
            <person name="Deng Y."/>
            <person name="Ran L."/>
            <person name="Shi X."/>
            <person name="Wang X."/>
            <person name="Wu Q."/>
            <person name="Li C."/>
            <person name="Ren X."/>
            <person name="Wang J."/>
            <person name="Wang X."/>
            <person name="Li D."/>
            <person name="Liu D."/>
            <person name="Zhang X."/>
            <person name="Ji Z."/>
            <person name="Zhao W."/>
            <person name="Sun Y."/>
            <person name="Zhang Z."/>
            <person name="Bao J."/>
            <person name="Han Y."/>
            <person name="Dong L."/>
            <person name="Ji J."/>
            <person name="Chen P."/>
            <person name="Wu S."/>
            <person name="Liu J."/>
            <person name="Xiao Y."/>
            <person name="Bu D."/>
            <person name="Tan J."/>
            <person name="Yang L."/>
            <person name="Ye C."/>
            <person name="Zhang J."/>
            <person name="Xu J."/>
            <person name="Zhou Y."/>
            <person name="Yu Y."/>
            <person name="Zhang B."/>
            <person name="Zhuang S."/>
            <person name="Wei H."/>
            <person name="Liu B."/>
            <person name="Lei M."/>
            <person name="Yu H."/>
            <person name="Li Y."/>
            <person name="Xu H."/>
            <person name="Wei S."/>
            <person name="He X."/>
            <person name="Fang L."/>
            <person name="Zhang Z."/>
            <person name="Zhang Y."/>
            <person name="Huang X."/>
            <person name="Su Z."/>
            <person name="Tong W."/>
            <person name="Li J."/>
            <person name="Tong Z."/>
            <person name="Li S."/>
            <person name="Ye J."/>
            <person name="Wang L."/>
            <person name="Fang L."/>
            <person name="Lei T."/>
            <person name="Chen C.-S."/>
            <person name="Chen H.-C."/>
            <person name="Xu Z."/>
            <person name="Li H."/>
            <person name="Huang H."/>
            <person name="Zhang F."/>
            <person name="Xu H."/>
            <person name="Li N."/>
            <person name="Zhao C."/>
            <person name="Li S."/>
            <person name="Dong L."/>
            <person name="Huang Y."/>
            <person name="Li L."/>
            <person name="Xi Y."/>
            <person name="Qi Q."/>
            <person name="Li W."/>
            <person name="Zhang B."/>
            <person name="Hu W."/>
            <person name="Zhang Y."/>
            <person name="Tian X."/>
            <person name="Jiao Y."/>
            <person name="Liang X."/>
            <person name="Jin J."/>
            <person name="Gao L."/>
            <person name="Zheng W."/>
            <person name="Hao B."/>
            <person name="Liu S.-M."/>
            <person name="Wang W."/>
            <person name="Yuan L."/>
            <person name="Cao M."/>
            <person name="McDermott J."/>
            <person name="Samudrala R."/>
            <person name="Wang J."/>
            <person name="Wong G.K.-S."/>
            <person name="Yang H."/>
        </authorList>
    </citation>
    <scope>NUCLEOTIDE SEQUENCE [LARGE SCALE GENOMIC DNA]</scope>
    <source>
        <strain>cv. Nipponbare</strain>
    </source>
</reference>
<reference key="7">
    <citation type="journal article" date="2003" name="Science">
        <title>Collection, mapping, and annotation of over 28,000 cDNA clones from japonica rice.</title>
        <authorList>
            <consortium name="The rice full-length cDNA consortium"/>
        </authorList>
    </citation>
    <scope>NUCLEOTIDE SEQUENCE [LARGE SCALE MRNA]</scope>
    <source>
        <strain>cv. Nipponbare</strain>
    </source>
</reference>
<reference key="8">
    <citation type="journal article" date="2010" name="Plant J.">
        <title>Two LysM receptor molecules, CEBiP and OsCERK1, cooperatively regulate chitin elicitor signaling in rice.</title>
        <authorList>
            <person name="Shimizu T."/>
            <person name="Nakano T."/>
            <person name="Takamizawa D."/>
            <person name="Desaki Y."/>
            <person name="Ishii-Minami N."/>
            <person name="Nishizawa Y."/>
            <person name="Minami E."/>
            <person name="Okada K."/>
            <person name="Yamane H."/>
            <person name="Kaku H."/>
            <person name="Shibuya N."/>
        </authorList>
    </citation>
    <scope>FUNCTION</scope>
    <scope>HOMOOLIGOMERIZATION</scope>
    <scope>INTERACTION WITH CHITIN AND CERK1</scope>
    <scope>TISSUE SPECIFICITY</scope>
    <source>
        <strain>cv. Nipponbare</strain>
    </source>
</reference>
<reference key="9">
    <citation type="journal article" date="2012" name="Plant Cell Physiol.">
        <title>Functional characterization of CEBiP and CERK1 homologs in Arabidopsis and rice reveals the presence of different chitin receptor systems in plants.</title>
        <authorList>
            <person name="Shinya T."/>
            <person name="Motoyama N."/>
            <person name="Ikeda A."/>
            <person name="Wada M."/>
            <person name="Kamiya K."/>
            <person name="Hayafune M."/>
            <person name="Kaku H."/>
            <person name="Shibuya N."/>
        </authorList>
    </citation>
    <scope>FUNCTION</scope>
    <scope>INTERACTION WITH CHITIN</scope>
</reference>
<reference key="10">
    <citation type="journal article" date="2014" name="Mol. Plant Microbe Interact.">
        <title>Targeted gene disruption of OsCERK1 reveals its indispensable role in chitin perception and involvement in the peptidoglycan response and immunity in rice.</title>
        <authorList>
            <person name="Kouzai Y."/>
            <person name="Mochizuki S."/>
            <person name="Nakajima K."/>
            <person name="Desaki Y."/>
            <person name="Hayafune M."/>
            <person name="Miyazaki H."/>
            <person name="Yokotani N."/>
            <person name="Ozawa K."/>
            <person name="Minami E."/>
            <person name="Kaku H."/>
            <person name="Shibuya N."/>
            <person name="Nishizawa Y."/>
        </authorList>
    </citation>
    <scope>INTERACTION WITH LYP4 AND LYP6</scope>
</reference>
<reference key="11">
    <citation type="journal article" date="2016" name="Structure">
        <title>Molecular mechanism for fungal cell wall recognition by rice chitin receptor OsCEBiP.</title>
        <authorList>
            <person name="Liu S."/>
            <person name="Wang J."/>
            <person name="Han Z."/>
            <person name="Gong X."/>
            <person name="Zhang H."/>
            <person name="Chai J."/>
        </authorList>
    </citation>
    <scope>X-RAY CRYSTALLOGRAPHY (2.40 ANGSTROMS) OF 29-325 IN COMPLEX WITH CHITIN</scope>
    <scope>DISULFIDE BONDS</scope>
    <scope>GLYCOSYLATION AT ASN-63; ASN-89; ASN-184 AND ASN-306</scope>
</reference>
<sequence length="356" mass="37200">MASLTAALATPAAAALLLLVLLAAPASAANFTCAVASGTTCKSAILYTSPNATTYGNLVARFNTTTLPDLLGANGLPDGTLSSAPVAANSTVKIPFRCRCNGDVGQSDRLPIYVVQPQDGLDAIARNVFNAFVTYQEIAAANNIPDPNKINVSQTLWIPLPCSCDKEEGSNVMHLAYSVGKGENTSAIAAKYGVTESTLLTRNKIDDPTKLQMGQILDVPLPVCRSSISDTSADHNLMLLPDGTYGFTAGNCIRCSCSSTTYQLNCTAVQNKGCPSVPLCNGTLKLGETNGTGCGSTTCAYSGYSNSSSLIIQTSLATNQTTACQRGGSGRSQFARSMWSMSVISFHMVLIIICFL</sequence>
<name>CEBIP_ORYSJ</name>
<comment type="function">
    <text evidence="4 5 6">Chitin elicitor-binding protein involved in the perception and transduction of chitin oligosaccharide elicitor signal for defense responses.</text>
</comment>
<comment type="subunit">
    <text evidence="4 5 6 7">Forms homooligomer. Interacts with CERK1. Binds to chitin oligosaccharide elicitor. Interacts with LYP4 and LYP6 (PubMed:24964058).</text>
</comment>
<comment type="subcellular location">
    <subcellularLocation>
        <location evidence="4">Cell membrane</location>
        <topology evidence="4">Single-pass membrane protein</topology>
    </subcellularLocation>
</comment>
<comment type="tissue specificity">
    <text evidence="5">Expressed in seedlings, roots, shoots, stems and flowers.</text>
</comment>
<comment type="induction">
    <text evidence="4">By chitin oligosaccharide elicitor.</text>
</comment>
<comment type="PTM">
    <text evidence="4">N-glycosylated.</text>
</comment>
<comment type="sequence caution" evidence="11">
    <conflict type="erroneous initiation">
        <sequence resource="EMBL-CDS" id="BAE95828"/>
    </conflict>
    <text>Extended N-terminus.</text>
</comment>
<gene>
    <name evidence="9" type="primary">CEBIP</name>
    <name evidence="14" type="ordered locus">Os03g0133400</name>
    <name evidence="13" type="ordered locus">LOC_Os03g04110</name>
    <name evidence="12" type="ORF">OJ1006F06.19</name>
    <name evidence="15" type="ORF">OsJ_30068</name>
</gene>
<evidence type="ECO:0000250" key="1"/>
<evidence type="ECO:0000255" key="2"/>
<evidence type="ECO:0000255" key="3">
    <source>
        <dbReference type="PROSITE-ProRule" id="PRU01118"/>
    </source>
</evidence>
<evidence type="ECO:0000269" key="4">
    <source>
    </source>
</evidence>
<evidence type="ECO:0000269" key="5">
    <source>
    </source>
</evidence>
<evidence type="ECO:0000269" key="6">
    <source>
    </source>
</evidence>
<evidence type="ECO:0000269" key="7">
    <source>
    </source>
</evidence>
<evidence type="ECO:0000269" key="8">
    <source>
    </source>
</evidence>
<evidence type="ECO:0000303" key="9">
    <source>
    </source>
</evidence>
<evidence type="ECO:0000303" key="10">
    <source>
    </source>
</evidence>
<evidence type="ECO:0000305" key="11"/>
<evidence type="ECO:0000312" key="12">
    <source>
        <dbReference type="EMBL" id="AAN05509.1"/>
    </source>
</evidence>
<evidence type="ECO:0000312" key="13">
    <source>
        <dbReference type="EMBL" id="ABF93833.1"/>
    </source>
</evidence>
<evidence type="ECO:0000312" key="14">
    <source>
        <dbReference type="EMBL" id="BAS82158.1"/>
    </source>
</evidence>
<evidence type="ECO:0000312" key="15">
    <source>
        <dbReference type="EMBL" id="EAZ45419.1"/>
    </source>
</evidence>
<evidence type="ECO:0007744" key="16">
    <source>
        <dbReference type="PDB" id="5JCD"/>
    </source>
</evidence>
<evidence type="ECO:0007744" key="17">
    <source>
        <dbReference type="PDB" id="5JCE"/>
    </source>
</evidence>
<evidence type="ECO:0007829" key="18">
    <source>
        <dbReference type="PDB" id="5JCD"/>
    </source>
</evidence>
<evidence type="ECO:0007829" key="19">
    <source>
        <dbReference type="PDB" id="5JCE"/>
    </source>
</evidence>
<keyword id="KW-0002">3D-structure</keyword>
<keyword id="KW-1003">Cell membrane</keyword>
<keyword id="KW-0147">Chitin-binding</keyword>
<keyword id="KW-0903">Direct protein sequencing</keyword>
<keyword id="KW-1015">Disulfide bond</keyword>
<keyword id="KW-0325">Glycoprotein</keyword>
<keyword id="KW-0472">Membrane</keyword>
<keyword id="KW-0611">Plant defense</keyword>
<keyword id="KW-1185">Reference proteome</keyword>
<keyword id="KW-0677">Repeat</keyword>
<keyword id="KW-0732">Signal</keyword>
<keyword id="KW-0812">Transmembrane</keyword>
<keyword id="KW-1133">Transmembrane helix</keyword>
<organism>
    <name type="scientific">Oryza sativa subsp. japonica</name>
    <name type="common">Rice</name>
    <dbReference type="NCBI Taxonomy" id="39947"/>
    <lineage>
        <taxon>Eukaryota</taxon>
        <taxon>Viridiplantae</taxon>
        <taxon>Streptophyta</taxon>
        <taxon>Embryophyta</taxon>
        <taxon>Tracheophyta</taxon>
        <taxon>Spermatophyta</taxon>
        <taxon>Magnoliopsida</taxon>
        <taxon>Liliopsida</taxon>
        <taxon>Poales</taxon>
        <taxon>Poaceae</taxon>
        <taxon>BOP clade</taxon>
        <taxon>Oryzoideae</taxon>
        <taxon>Oryzeae</taxon>
        <taxon>Oryzinae</taxon>
        <taxon>Oryza</taxon>
        <taxon>Oryza sativa</taxon>
    </lineage>
</organism>